<accession>Q8XJL2</accession>
<feature type="chain" id="PRO_0000082769" description="Peptide deformylase 1">
    <location>
        <begin position="1"/>
        <end position="147"/>
    </location>
</feature>
<feature type="active site" evidence="1">
    <location>
        <position position="133"/>
    </location>
</feature>
<feature type="binding site" evidence="1">
    <location>
        <position position="90"/>
    </location>
    <ligand>
        <name>Fe cation</name>
        <dbReference type="ChEBI" id="CHEBI:24875"/>
    </ligand>
</feature>
<feature type="binding site" evidence="1">
    <location>
        <position position="132"/>
    </location>
    <ligand>
        <name>Fe cation</name>
        <dbReference type="ChEBI" id="CHEBI:24875"/>
    </ligand>
</feature>
<feature type="binding site" evidence="1">
    <location>
        <position position="136"/>
    </location>
    <ligand>
        <name>Fe cation</name>
        <dbReference type="ChEBI" id="CHEBI:24875"/>
    </ligand>
</feature>
<reference key="1">
    <citation type="journal article" date="2002" name="Proc. Natl. Acad. Sci. U.S.A.">
        <title>Complete genome sequence of Clostridium perfringens, an anaerobic flesh-eater.</title>
        <authorList>
            <person name="Shimizu T."/>
            <person name="Ohtani K."/>
            <person name="Hirakawa H."/>
            <person name="Ohshima K."/>
            <person name="Yamashita A."/>
            <person name="Shiba T."/>
            <person name="Ogasawara N."/>
            <person name="Hattori M."/>
            <person name="Kuhara S."/>
            <person name="Hayashi H."/>
        </authorList>
    </citation>
    <scope>NUCLEOTIDE SEQUENCE [LARGE SCALE GENOMIC DNA]</scope>
    <source>
        <strain>13 / Type A</strain>
    </source>
</reference>
<name>DEF1_CLOPE</name>
<dbReference type="EC" id="3.5.1.88" evidence="1"/>
<dbReference type="EMBL" id="BA000016">
    <property type="protein sequence ID" value="BAB81450.1"/>
    <property type="molecule type" value="Genomic_DNA"/>
</dbReference>
<dbReference type="SMR" id="Q8XJL2"/>
<dbReference type="STRING" id="195102.gene:10491008"/>
<dbReference type="KEGG" id="cpe:CPE1744"/>
<dbReference type="HOGENOM" id="CLU_061901_4_2_9"/>
<dbReference type="Proteomes" id="UP000000818">
    <property type="component" value="Chromosome"/>
</dbReference>
<dbReference type="GO" id="GO:0046872">
    <property type="term" value="F:metal ion binding"/>
    <property type="evidence" value="ECO:0007669"/>
    <property type="project" value="UniProtKB-KW"/>
</dbReference>
<dbReference type="GO" id="GO:0042586">
    <property type="term" value="F:peptide deformylase activity"/>
    <property type="evidence" value="ECO:0007669"/>
    <property type="project" value="UniProtKB-UniRule"/>
</dbReference>
<dbReference type="GO" id="GO:0043686">
    <property type="term" value="P:co-translational protein modification"/>
    <property type="evidence" value="ECO:0007669"/>
    <property type="project" value="TreeGrafter"/>
</dbReference>
<dbReference type="GO" id="GO:0006412">
    <property type="term" value="P:translation"/>
    <property type="evidence" value="ECO:0007669"/>
    <property type="project" value="UniProtKB-UniRule"/>
</dbReference>
<dbReference type="CDD" id="cd00487">
    <property type="entry name" value="Pep_deformylase"/>
    <property type="match status" value="1"/>
</dbReference>
<dbReference type="Gene3D" id="3.90.45.10">
    <property type="entry name" value="Peptide deformylase"/>
    <property type="match status" value="1"/>
</dbReference>
<dbReference type="HAMAP" id="MF_00163">
    <property type="entry name" value="Pep_deformylase"/>
    <property type="match status" value="1"/>
</dbReference>
<dbReference type="InterPro" id="IPR023635">
    <property type="entry name" value="Peptide_deformylase"/>
</dbReference>
<dbReference type="InterPro" id="IPR036821">
    <property type="entry name" value="Peptide_deformylase_sf"/>
</dbReference>
<dbReference type="NCBIfam" id="TIGR00079">
    <property type="entry name" value="pept_deformyl"/>
    <property type="match status" value="1"/>
</dbReference>
<dbReference type="NCBIfam" id="NF001159">
    <property type="entry name" value="PRK00150.1-3"/>
    <property type="match status" value="1"/>
</dbReference>
<dbReference type="PANTHER" id="PTHR10458">
    <property type="entry name" value="PEPTIDE DEFORMYLASE"/>
    <property type="match status" value="1"/>
</dbReference>
<dbReference type="PANTHER" id="PTHR10458:SF22">
    <property type="entry name" value="PEPTIDE DEFORMYLASE"/>
    <property type="match status" value="1"/>
</dbReference>
<dbReference type="Pfam" id="PF01327">
    <property type="entry name" value="Pep_deformylase"/>
    <property type="match status" value="1"/>
</dbReference>
<dbReference type="PIRSF" id="PIRSF004749">
    <property type="entry name" value="Pep_def"/>
    <property type="match status" value="1"/>
</dbReference>
<dbReference type="PRINTS" id="PR01576">
    <property type="entry name" value="PDEFORMYLASE"/>
</dbReference>
<dbReference type="SUPFAM" id="SSF56420">
    <property type="entry name" value="Peptide deformylase"/>
    <property type="match status" value="1"/>
</dbReference>
<sequence>MAIRNLRFNDDEILRKKCRVVDDINDRIKVLVEDMIETMYENNGVGLASPQVGILKRIFVVDAMDGAGSRVFINPEILEKSGEQTDEEGCLSLPGRHKPVKRANKIKIKALDVNGNEFVLDAEGFLARAIQHEYDHLEGVLFIDHEL</sequence>
<protein>
    <recommendedName>
        <fullName evidence="1">Peptide deformylase 1</fullName>
        <shortName evidence="1">PDF 1</shortName>
        <ecNumber evidence="1">3.5.1.88</ecNumber>
    </recommendedName>
    <alternativeName>
        <fullName evidence="1">Polypeptide deformylase 1</fullName>
    </alternativeName>
</protein>
<organism>
    <name type="scientific">Clostridium perfringens (strain 13 / Type A)</name>
    <dbReference type="NCBI Taxonomy" id="195102"/>
    <lineage>
        <taxon>Bacteria</taxon>
        <taxon>Bacillati</taxon>
        <taxon>Bacillota</taxon>
        <taxon>Clostridia</taxon>
        <taxon>Eubacteriales</taxon>
        <taxon>Clostridiaceae</taxon>
        <taxon>Clostridium</taxon>
    </lineage>
</organism>
<proteinExistence type="inferred from homology"/>
<evidence type="ECO:0000255" key="1">
    <source>
        <dbReference type="HAMAP-Rule" id="MF_00163"/>
    </source>
</evidence>
<gene>
    <name evidence="1" type="primary">def1</name>
    <name type="ordered locus">CPE1744</name>
</gene>
<comment type="function">
    <text evidence="1">Removes the formyl group from the N-terminal Met of newly synthesized proteins. Requires at least a dipeptide for an efficient rate of reaction. N-terminal L-methionine is a prerequisite for activity but the enzyme has broad specificity at other positions.</text>
</comment>
<comment type="catalytic activity">
    <reaction evidence="1">
        <text>N-terminal N-formyl-L-methionyl-[peptide] + H2O = N-terminal L-methionyl-[peptide] + formate</text>
        <dbReference type="Rhea" id="RHEA:24420"/>
        <dbReference type="Rhea" id="RHEA-COMP:10639"/>
        <dbReference type="Rhea" id="RHEA-COMP:10640"/>
        <dbReference type="ChEBI" id="CHEBI:15377"/>
        <dbReference type="ChEBI" id="CHEBI:15740"/>
        <dbReference type="ChEBI" id="CHEBI:49298"/>
        <dbReference type="ChEBI" id="CHEBI:64731"/>
        <dbReference type="EC" id="3.5.1.88"/>
    </reaction>
</comment>
<comment type="cofactor">
    <cofactor evidence="1">
        <name>Fe(2+)</name>
        <dbReference type="ChEBI" id="CHEBI:29033"/>
    </cofactor>
    <text evidence="1">Binds 1 Fe(2+) ion.</text>
</comment>
<comment type="similarity">
    <text evidence="1">Belongs to the polypeptide deformylase family.</text>
</comment>
<keyword id="KW-0378">Hydrolase</keyword>
<keyword id="KW-0408">Iron</keyword>
<keyword id="KW-0479">Metal-binding</keyword>
<keyword id="KW-0648">Protein biosynthesis</keyword>
<keyword id="KW-1185">Reference proteome</keyword>